<name>NADD_BACC7</name>
<accession>B7HPN1</accession>
<keyword id="KW-0067">ATP-binding</keyword>
<keyword id="KW-0520">NAD</keyword>
<keyword id="KW-0547">Nucleotide-binding</keyword>
<keyword id="KW-0548">Nucleotidyltransferase</keyword>
<keyword id="KW-0662">Pyridine nucleotide biosynthesis</keyword>
<keyword id="KW-0808">Transferase</keyword>
<reference key="1">
    <citation type="submission" date="2008-10" db="EMBL/GenBank/DDBJ databases">
        <title>Genome sequence of Bacillus cereus AH187.</title>
        <authorList>
            <person name="Dodson R.J."/>
            <person name="Durkin A.S."/>
            <person name="Rosovitz M.J."/>
            <person name="Rasko D.A."/>
            <person name="Kolsto A.B."/>
            <person name="Okstad O.A."/>
            <person name="Ravel J."/>
            <person name="Sutton G."/>
        </authorList>
    </citation>
    <scope>NUCLEOTIDE SEQUENCE [LARGE SCALE GENOMIC DNA]</scope>
    <source>
        <strain>AH187</strain>
    </source>
</reference>
<comment type="function">
    <text evidence="1">Catalyzes the reversible adenylation of nicotinate mononucleotide (NaMN) to nicotinic acid adenine dinucleotide (NaAD).</text>
</comment>
<comment type="catalytic activity">
    <reaction evidence="1">
        <text>nicotinate beta-D-ribonucleotide + ATP + H(+) = deamido-NAD(+) + diphosphate</text>
        <dbReference type="Rhea" id="RHEA:22860"/>
        <dbReference type="ChEBI" id="CHEBI:15378"/>
        <dbReference type="ChEBI" id="CHEBI:30616"/>
        <dbReference type="ChEBI" id="CHEBI:33019"/>
        <dbReference type="ChEBI" id="CHEBI:57502"/>
        <dbReference type="ChEBI" id="CHEBI:58437"/>
        <dbReference type="EC" id="2.7.7.18"/>
    </reaction>
</comment>
<comment type="pathway">
    <text evidence="1">Cofactor biosynthesis; NAD(+) biosynthesis; deamido-NAD(+) from nicotinate D-ribonucleotide: step 1/1.</text>
</comment>
<comment type="similarity">
    <text evidence="1">Belongs to the NadD family.</text>
</comment>
<sequence>MRKIGIIGGTFDPPHYGHLLIANEVYHALNLEEVWFLPNQIPPHKHGRNITSVESRLQMLELATEEEEHFSICLEELSRKGPSYTYDTMLQLTKKHPDVQFHFIIGGDMVEYLPKWYNIEALLDLVTFVGVARPGYTLHTPYPITTVEIPEFAVSSSLLRERYKEKKTCKYLLPEKVQVYIERNGLYES</sequence>
<protein>
    <recommendedName>
        <fullName evidence="1">Probable nicotinate-nucleotide adenylyltransferase</fullName>
        <ecNumber evidence="1">2.7.7.18</ecNumber>
    </recommendedName>
    <alternativeName>
        <fullName evidence="1">Deamido-NAD(+) diphosphorylase</fullName>
    </alternativeName>
    <alternativeName>
        <fullName evidence="1">Deamido-NAD(+) pyrophosphorylase</fullName>
    </alternativeName>
    <alternativeName>
        <fullName evidence="1">Nicotinate mononucleotide adenylyltransferase</fullName>
        <shortName evidence="1">NaMN adenylyltransferase</shortName>
    </alternativeName>
</protein>
<gene>
    <name evidence="1" type="primary">nadD</name>
    <name type="ordered locus">BCAH187_A4465</name>
</gene>
<evidence type="ECO:0000255" key="1">
    <source>
        <dbReference type="HAMAP-Rule" id="MF_00244"/>
    </source>
</evidence>
<dbReference type="EC" id="2.7.7.18" evidence="1"/>
<dbReference type="EMBL" id="CP001177">
    <property type="protein sequence ID" value="ACJ81974.1"/>
    <property type="molecule type" value="Genomic_DNA"/>
</dbReference>
<dbReference type="SMR" id="B7HPN1"/>
<dbReference type="KEGG" id="bcr:BCAH187_A4465"/>
<dbReference type="HOGENOM" id="CLU_069765_3_1_9"/>
<dbReference type="UniPathway" id="UPA00253">
    <property type="reaction ID" value="UER00332"/>
</dbReference>
<dbReference type="Proteomes" id="UP000002214">
    <property type="component" value="Chromosome"/>
</dbReference>
<dbReference type="GO" id="GO:0005524">
    <property type="term" value="F:ATP binding"/>
    <property type="evidence" value="ECO:0007669"/>
    <property type="project" value="UniProtKB-KW"/>
</dbReference>
<dbReference type="GO" id="GO:0004515">
    <property type="term" value="F:nicotinate-nucleotide adenylyltransferase activity"/>
    <property type="evidence" value="ECO:0007669"/>
    <property type="project" value="UniProtKB-UniRule"/>
</dbReference>
<dbReference type="GO" id="GO:0009435">
    <property type="term" value="P:NAD biosynthetic process"/>
    <property type="evidence" value="ECO:0007669"/>
    <property type="project" value="UniProtKB-UniRule"/>
</dbReference>
<dbReference type="CDD" id="cd02165">
    <property type="entry name" value="NMNAT"/>
    <property type="match status" value="1"/>
</dbReference>
<dbReference type="FunFam" id="3.40.50.620:FF:000079">
    <property type="entry name" value="Probable nicotinate-nucleotide adenylyltransferase"/>
    <property type="match status" value="1"/>
</dbReference>
<dbReference type="Gene3D" id="3.40.50.620">
    <property type="entry name" value="HUPs"/>
    <property type="match status" value="1"/>
</dbReference>
<dbReference type="HAMAP" id="MF_00244">
    <property type="entry name" value="NaMN_adenylyltr"/>
    <property type="match status" value="1"/>
</dbReference>
<dbReference type="InterPro" id="IPR004821">
    <property type="entry name" value="Cyt_trans-like"/>
</dbReference>
<dbReference type="InterPro" id="IPR005248">
    <property type="entry name" value="NadD/NMNAT"/>
</dbReference>
<dbReference type="InterPro" id="IPR014729">
    <property type="entry name" value="Rossmann-like_a/b/a_fold"/>
</dbReference>
<dbReference type="NCBIfam" id="TIGR00125">
    <property type="entry name" value="cyt_tran_rel"/>
    <property type="match status" value="1"/>
</dbReference>
<dbReference type="NCBIfam" id="TIGR00482">
    <property type="entry name" value="nicotinate (nicotinamide) nucleotide adenylyltransferase"/>
    <property type="match status" value="1"/>
</dbReference>
<dbReference type="NCBIfam" id="NF000840">
    <property type="entry name" value="PRK00071.1-3"/>
    <property type="match status" value="1"/>
</dbReference>
<dbReference type="NCBIfam" id="NF000841">
    <property type="entry name" value="PRK00071.1-4"/>
    <property type="match status" value="1"/>
</dbReference>
<dbReference type="PANTHER" id="PTHR39321">
    <property type="entry name" value="NICOTINATE-NUCLEOTIDE ADENYLYLTRANSFERASE-RELATED"/>
    <property type="match status" value="1"/>
</dbReference>
<dbReference type="PANTHER" id="PTHR39321:SF3">
    <property type="entry name" value="PHOSPHOPANTETHEINE ADENYLYLTRANSFERASE"/>
    <property type="match status" value="1"/>
</dbReference>
<dbReference type="Pfam" id="PF01467">
    <property type="entry name" value="CTP_transf_like"/>
    <property type="match status" value="1"/>
</dbReference>
<dbReference type="SUPFAM" id="SSF52374">
    <property type="entry name" value="Nucleotidylyl transferase"/>
    <property type="match status" value="1"/>
</dbReference>
<feature type="chain" id="PRO_1000192226" description="Probable nicotinate-nucleotide adenylyltransferase">
    <location>
        <begin position="1"/>
        <end position="189"/>
    </location>
</feature>
<proteinExistence type="inferred from homology"/>
<organism>
    <name type="scientific">Bacillus cereus (strain AH187)</name>
    <dbReference type="NCBI Taxonomy" id="405534"/>
    <lineage>
        <taxon>Bacteria</taxon>
        <taxon>Bacillati</taxon>
        <taxon>Bacillota</taxon>
        <taxon>Bacilli</taxon>
        <taxon>Bacillales</taxon>
        <taxon>Bacillaceae</taxon>
        <taxon>Bacillus</taxon>
        <taxon>Bacillus cereus group</taxon>
    </lineage>
</organism>